<comment type="function">
    <text evidence="1">Probable vacuolar iron transporter that may be involved in the regulation of iron distribution throughout the plant.</text>
</comment>
<comment type="catalytic activity">
    <reaction evidence="2">
        <text>Fe(2+)(in) = Fe(2+)(out)</text>
        <dbReference type="Rhea" id="RHEA:28486"/>
        <dbReference type="ChEBI" id="CHEBI:29033"/>
    </reaction>
    <physiologicalReaction direction="left-to-right" evidence="5">
        <dbReference type="Rhea" id="RHEA:28487"/>
    </physiologicalReaction>
</comment>
<comment type="subcellular location">
    <subcellularLocation>
        <location evidence="1">Vacuole membrane</location>
        <topology evidence="3">Multi-pass membrane protein</topology>
    </subcellularLocation>
</comment>
<comment type="similarity">
    <text evidence="5">Belongs to the CCC1 family.</text>
</comment>
<gene>
    <name evidence="6" type="ordered locus">Os08g0153300</name>
    <name evidence="5" type="ordered locus">LOC_Os08g05720</name>
    <name evidence="7" type="ORF">OJ1066_B03.106</name>
    <name evidence="8" type="ORF">OJ1349_D05.127</name>
</gene>
<evidence type="ECO:0000250" key="1">
    <source>
        <dbReference type="UniProtKB" id="Q6MWE5"/>
    </source>
</evidence>
<evidence type="ECO:0000250" key="2">
    <source>
        <dbReference type="UniProtKB" id="Q9LPU9"/>
    </source>
</evidence>
<evidence type="ECO:0000255" key="3"/>
<evidence type="ECO:0000256" key="4">
    <source>
        <dbReference type="SAM" id="MobiDB-lite"/>
    </source>
</evidence>
<evidence type="ECO:0000305" key="5"/>
<evidence type="ECO:0000312" key="6">
    <source>
        <dbReference type="EMBL" id="AP014964"/>
    </source>
</evidence>
<evidence type="ECO:0000312" key="7">
    <source>
        <dbReference type="EMBL" id="BAC55676.1"/>
    </source>
</evidence>
<evidence type="ECO:0000312" key="8">
    <source>
        <dbReference type="EMBL" id="BAC99767.1"/>
    </source>
</evidence>
<reference key="1">
    <citation type="journal article" date="2005" name="Nature">
        <title>The map-based sequence of the rice genome.</title>
        <authorList>
            <consortium name="International rice genome sequencing project (IRGSP)"/>
        </authorList>
    </citation>
    <scope>NUCLEOTIDE SEQUENCE [LARGE SCALE GENOMIC DNA]</scope>
    <source>
        <strain>cv. Nipponbare</strain>
    </source>
</reference>
<reference key="2">
    <citation type="journal article" date="2013" name="Rice">
        <title>Improvement of the Oryza sativa Nipponbare reference genome using next generation sequence and optical map data.</title>
        <authorList>
            <person name="Kawahara Y."/>
            <person name="de la Bastide M."/>
            <person name="Hamilton J.P."/>
            <person name="Kanamori H."/>
            <person name="McCombie W.R."/>
            <person name="Ouyang S."/>
            <person name="Schwartz D.C."/>
            <person name="Tanaka T."/>
            <person name="Wu J."/>
            <person name="Zhou S."/>
            <person name="Childs K.L."/>
            <person name="Davidson R.M."/>
            <person name="Lin H."/>
            <person name="Quesada-Ocampo L."/>
            <person name="Vaillancourt B."/>
            <person name="Sakai H."/>
            <person name="Lee S.S."/>
            <person name="Kim J."/>
            <person name="Numa H."/>
            <person name="Itoh T."/>
            <person name="Buell C.R."/>
            <person name="Matsumoto T."/>
        </authorList>
    </citation>
    <scope>GENOME REANNOTATION</scope>
    <source>
        <strain>cv. Nipponbare</strain>
    </source>
</reference>
<sequence length="249" mass="25100">MAMQMNSVVHVSTSPSPSPATSPPPEGKQEHGEVAAVHVVGVGDDEAVMVVKDEEAFGGGGVDYSGRAQWLRAAVLGANDGLVSVASLMIGVGAVSESGRAMLVSGVAGLVAGACSMAIGEFVSVYAQYDIEVAAARRRRRQRRRRCDGDGEEEGSGRLPSPFKAAAASALAFTVGALLPLLAGGFVRPWAPRVAAVCAATSAALAGFGALGAALGGASPARSAARVLLGGWAAMAACYGVLRLFANLY</sequence>
<proteinExistence type="inferred from homology"/>
<organism>
    <name type="scientific">Oryza sativa subsp. japonica</name>
    <name type="common">Rice</name>
    <dbReference type="NCBI Taxonomy" id="39947"/>
    <lineage>
        <taxon>Eukaryota</taxon>
        <taxon>Viridiplantae</taxon>
        <taxon>Streptophyta</taxon>
        <taxon>Embryophyta</taxon>
        <taxon>Tracheophyta</taxon>
        <taxon>Spermatophyta</taxon>
        <taxon>Magnoliopsida</taxon>
        <taxon>Liliopsida</taxon>
        <taxon>Poales</taxon>
        <taxon>Poaceae</taxon>
        <taxon>BOP clade</taxon>
        <taxon>Oryzoideae</taxon>
        <taxon>Oryzeae</taxon>
        <taxon>Oryzinae</taxon>
        <taxon>Oryza</taxon>
        <taxon>Oryza sativa</taxon>
    </lineage>
</organism>
<accession>Q84ZM7</accession>
<name>VITH3_ORYSJ</name>
<keyword id="KW-0406">Ion transport</keyword>
<keyword id="KW-0408">Iron</keyword>
<keyword id="KW-0410">Iron transport</keyword>
<keyword id="KW-0472">Membrane</keyword>
<keyword id="KW-1185">Reference proteome</keyword>
<keyword id="KW-0812">Transmembrane</keyword>
<keyword id="KW-1133">Transmembrane helix</keyword>
<keyword id="KW-0813">Transport</keyword>
<keyword id="KW-0926">Vacuole</keyword>
<dbReference type="EMBL" id="AP003940">
    <property type="protein sequence ID" value="BAC55676.1"/>
    <property type="molecule type" value="Genomic_DNA"/>
</dbReference>
<dbReference type="EMBL" id="AP005467">
    <property type="protein sequence ID" value="BAC99767.1"/>
    <property type="molecule type" value="Genomic_DNA"/>
</dbReference>
<dbReference type="EMBL" id="AP014964">
    <property type="status" value="NOT_ANNOTATED_CDS"/>
    <property type="molecule type" value="Genomic_DNA"/>
</dbReference>
<dbReference type="SMR" id="Q84ZM7"/>
<dbReference type="FunCoup" id="Q84ZM7">
    <property type="interactions" value="3"/>
</dbReference>
<dbReference type="STRING" id="39947.Q84ZM7"/>
<dbReference type="PaxDb" id="39947-Q84ZM7"/>
<dbReference type="GeneID" id="107282079"/>
<dbReference type="KEGG" id="osa:107282079"/>
<dbReference type="InParanoid" id="Q84ZM7"/>
<dbReference type="OrthoDB" id="73465at2759"/>
<dbReference type="Proteomes" id="UP000000763">
    <property type="component" value="Chromosome 8"/>
</dbReference>
<dbReference type="Proteomes" id="UP000059680">
    <property type="component" value="Chromosome 8"/>
</dbReference>
<dbReference type="GO" id="GO:0016020">
    <property type="term" value="C:membrane"/>
    <property type="evidence" value="ECO:0000318"/>
    <property type="project" value="GO_Central"/>
</dbReference>
<dbReference type="GO" id="GO:0005774">
    <property type="term" value="C:vacuolar membrane"/>
    <property type="evidence" value="ECO:0007669"/>
    <property type="project" value="UniProtKB-SubCell"/>
</dbReference>
<dbReference type="GO" id="GO:0005381">
    <property type="term" value="F:iron ion transmembrane transporter activity"/>
    <property type="evidence" value="ECO:0000318"/>
    <property type="project" value="GO_Central"/>
</dbReference>
<dbReference type="GO" id="GO:0005384">
    <property type="term" value="F:manganese ion transmembrane transporter activity"/>
    <property type="evidence" value="ECO:0000318"/>
    <property type="project" value="GO_Central"/>
</dbReference>
<dbReference type="GO" id="GO:0030026">
    <property type="term" value="P:intracellular manganese ion homeostasis"/>
    <property type="evidence" value="ECO:0000318"/>
    <property type="project" value="GO_Central"/>
</dbReference>
<dbReference type="CDD" id="cd02436">
    <property type="entry name" value="Nodulin-21"/>
    <property type="match status" value="1"/>
</dbReference>
<dbReference type="InterPro" id="IPR008217">
    <property type="entry name" value="Ccc1_fam"/>
</dbReference>
<dbReference type="PANTHER" id="PTHR31851">
    <property type="entry name" value="FE(2+)/MN(2+) TRANSPORTER PCL1"/>
    <property type="match status" value="1"/>
</dbReference>
<dbReference type="Pfam" id="PF01988">
    <property type="entry name" value="VIT1"/>
    <property type="match status" value="2"/>
</dbReference>
<protein>
    <recommendedName>
        <fullName evidence="5">Vacuolar iron transporter homolog 3</fullName>
    </recommendedName>
    <alternativeName>
        <fullName evidence="5">Protein NODULIN-LIKE 3</fullName>
    </alternativeName>
</protein>
<feature type="chain" id="PRO_0000411014" description="Vacuolar iron transporter homolog 3">
    <location>
        <begin position="1"/>
        <end position="249"/>
    </location>
</feature>
<feature type="topological domain" description="Cytoplasmic" evidence="3">
    <location>
        <begin position="1"/>
        <end position="74"/>
    </location>
</feature>
<feature type="transmembrane region" description="Helical" evidence="3">
    <location>
        <begin position="75"/>
        <end position="95"/>
    </location>
</feature>
<feature type="topological domain" description="Vacuolar" evidence="3">
    <location>
        <begin position="96"/>
        <end position="102"/>
    </location>
</feature>
<feature type="transmembrane region" description="Helical" evidence="3">
    <location>
        <begin position="103"/>
        <end position="123"/>
    </location>
</feature>
<feature type="topological domain" description="Cytoplasmic" evidence="3">
    <location>
        <begin position="124"/>
        <end position="166"/>
    </location>
</feature>
<feature type="transmembrane region" description="Helical" evidence="3">
    <location>
        <begin position="167"/>
        <end position="187"/>
    </location>
</feature>
<feature type="topological domain" description="Vacuolar" evidence="3">
    <location>
        <begin position="188"/>
        <end position="193"/>
    </location>
</feature>
<feature type="transmembrane region" description="Helical" evidence="3">
    <location>
        <begin position="194"/>
        <end position="214"/>
    </location>
</feature>
<feature type="topological domain" description="Cytoplasmic" evidence="3">
    <location>
        <begin position="215"/>
        <end position="226"/>
    </location>
</feature>
<feature type="transmembrane region" description="Helical" evidence="3">
    <location>
        <begin position="227"/>
        <end position="247"/>
    </location>
</feature>
<feature type="topological domain" description="Vacuolar" evidence="3">
    <location>
        <begin position="248"/>
        <end position="249"/>
    </location>
</feature>
<feature type="region of interest" description="Disordered" evidence="4">
    <location>
        <begin position="1"/>
        <end position="32"/>
    </location>
</feature>
<feature type="compositionally biased region" description="Pro residues" evidence="4">
    <location>
        <begin position="16"/>
        <end position="26"/>
    </location>
</feature>